<name>VL1_HPV17</name>
<proteinExistence type="inferred from homology"/>
<keyword id="KW-0167">Capsid protein</keyword>
<keyword id="KW-1015">Disulfide bond</keyword>
<keyword id="KW-1048">Host nucleus</keyword>
<keyword id="KW-0945">Host-virus interaction</keyword>
<keyword id="KW-0426">Late protein</keyword>
<keyword id="KW-1145">T=7 icosahedral capsid protein</keyword>
<keyword id="KW-1161">Viral attachment to host cell</keyword>
<keyword id="KW-1162">Viral penetration into host cytoplasm</keyword>
<keyword id="KW-0946">Virion</keyword>
<keyword id="KW-1164">Virus endocytosis by host</keyword>
<keyword id="KW-1160">Virus entry into host cell</keyword>
<protein>
    <recommendedName>
        <fullName evidence="1">Major capsid protein L1</fullName>
    </recommendedName>
</protein>
<gene>
    <name evidence="1" type="primary">L1</name>
</gene>
<reference key="1">
    <citation type="journal article" date="1994" name="Curr. Top. Microbiol. Immunol.">
        <title>Primer-directed sequencing of human papillomavirus types.</title>
        <authorList>
            <person name="Delius H."/>
            <person name="Hofmann B."/>
        </authorList>
    </citation>
    <scope>NUCLEOTIDE SEQUENCE [GENOMIC DNA]</scope>
</reference>
<reference key="2">
    <citation type="journal article" date="1992" name="J. Virol.">
        <title>Phylogenetic analysis of 48 papillomavirus types and 28 subtypes and variants: a showcase for the molecular evolution of DNA viruses.</title>
        <authorList>
            <person name="Chan S.-Y."/>
            <person name="Bernard H.U."/>
            <person name="Ong C.K."/>
            <person name="Chan S.P."/>
            <person name="Birgit H."/>
            <person name="Delius H."/>
        </authorList>
    </citation>
    <scope>NUCLEOTIDE SEQUENCE [GENOMIC DNA] OF 312-355</scope>
</reference>
<comment type="function">
    <text evidence="1">Forms an icosahedral capsid with a T=7 symmetry and a 50 nm diameter. The capsid is composed of 72 pentamers linked to each other by disulfide bonds and associated with L2 proteins. Binds to heparan sulfate proteoglycans on cell surface of basal layer keratinocytes to provide initial virion attachment. This binding mediates a conformational change in the virus capsid that facilitates efficient infection. The virion enters the host cell via endocytosis. During virus trafficking, L1 protein dissociates from the viral DNA and the genomic DNA is released to the host nucleus. The virion assembly takes place within the cell nucleus. Encapsulates the genomic DNA together with protein L2.</text>
</comment>
<comment type="subunit">
    <text evidence="1">Self-assembles into homopentamers. The capsid has an icosahedral symmetry and consists of 72 capsomers, with each capsomer being a pentamer of L1. Interacts with the minor capsid protein L2; this interaction is necessary for viral genome encapsidation. Interacts with protein E2; this interaction enhances E2-dependent replication and transcription activation.</text>
</comment>
<comment type="subcellular location">
    <subcellularLocation>
        <location evidence="1">Virion</location>
    </subcellularLocation>
    <subcellularLocation>
        <location evidence="1">Host nucleus</location>
    </subcellularLocation>
</comment>
<comment type="similarity">
    <text evidence="1">Belongs to the papillomaviridae L1 protein family.</text>
</comment>
<feature type="chain" id="PRO_0000133501" description="Major capsid protein L1">
    <location>
        <begin position="1"/>
        <end position="507"/>
    </location>
</feature>
<feature type="region of interest" description="Disordered" evidence="2">
    <location>
        <begin position="120"/>
        <end position="147"/>
    </location>
</feature>
<feature type="compositionally biased region" description="Polar residues" evidence="2">
    <location>
        <begin position="132"/>
        <end position="147"/>
    </location>
</feature>
<feature type="disulfide bond" description="Interchain (with C-439)" evidence="1">
    <location>
        <position position="175"/>
    </location>
</feature>
<feature type="disulfide bond" description="Interchain (with C-175)" evidence="1">
    <location>
        <position position="439"/>
    </location>
</feature>
<sequence length="507" mass="57293">MTLWLPTTGKVYLPPTPPVARVQSTDEYVERTNIFYHAMSDRLLTVGHPFYDVRSTDGLRIEVPKVSGNQYRAFRVTLPDPNKFALADMSVYNPEKERLVWACAGLEIGRGQPLGVGTTGHPLFNKLRDTENNSSYQGGSTDDRQNTSFDPKQVQMFVVGCVPCIGEHWDRAPVCENEQNNQTGLCPPLELKNTVIEDGDMVDIGFGNINNKVLSFNKSDVSLDIVNETCKYPDFLSMANDVYGDACFFFARREQCYARHYFVRGGNVGDAVPDGSVNQDHKFYLPAQTGQQQRTLGNSTYFPTVSGSLVTSDAQLFNRPFWLRRAQGHNNGILWGNQIFVTVADNTRNTNFSISVSTEAGAVTEYNSQNIREYLRHVEEYQLSFILQLCKIPLKAEVLTQINAMNSGILEDWQLGFVPTPDNPVHDIYRYINSKATKCPDAVVEKEKEDPFAKYTFWNVNLTEKLSLDLDQYPLGRKFIFQSGLQARPRTIRTSVKVPKGIKRKRS</sequence>
<organismHost>
    <name type="scientific">Homo sapiens</name>
    <name type="common">Human</name>
    <dbReference type="NCBI Taxonomy" id="9606"/>
</organismHost>
<accession>Q02514</accession>
<evidence type="ECO:0000255" key="1">
    <source>
        <dbReference type="HAMAP-Rule" id="MF_04002"/>
    </source>
</evidence>
<evidence type="ECO:0000256" key="2">
    <source>
        <dbReference type="SAM" id="MobiDB-lite"/>
    </source>
</evidence>
<dbReference type="EMBL" id="X74469">
    <property type="protein sequence ID" value="CAA52517.1"/>
    <property type="molecule type" value="Genomic_DNA"/>
</dbReference>
<dbReference type="EMBL" id="M96286">
    <property type="protein sequence ID" value="AAA47025.1"/>
    <property type="molecule type" value="Genomic_DNA"/>
</dbReference>
<dbReference type="PIR" id="S36484">
    <property type="entry name" value="S36484"/>
</dbReference>
<dbReference type="SMR" id="Q02514"/>
<dbReference type="Proteomes" id="UP000006932">
    <property type="component" value="Genome"/>
</dbReference>
<dbReference type="GO" id="GO:0042025">
    <property type="term" value="C:host cell nucleus"/>
    <property type="evidence" value="ECO:0007669"/>
    <property type="project" value="UniProtKB-SubCell"/>
</dbReference>
<dbReference type="GO" id="GO:0039620">
    <property type="term" value="C:T=7 icosahedral viral capsid"/>
    <property type="evidence" value="ECO:0007669"/>
    <property type="project" value="UniProtKB-UniRule"/>
</dbReference>
<dbReference type="GO" id="GO:0005198">
    <property type="term" value="F:structural molecule activity"/>
    <property type="evidence" value="ECO:0007669"/>
    <property type="project" value="UniProtKB-UniRule"/>
</dbReference>
<dbReference type="GO" id="GO:0075509">
    <property type="term" value="P:endocytosis involved in viral entry into host cell"/>
    <property type="evidence" value="ECO:0007669"/>
    <property type="project" value="UniProtKB-KW"/>
</dbReference>
<dbReference type="GO" id="GO:0019062">
    <property type="term" value="P:virion attachment to host cell"/>
    <property type="evidence" value="ECO:0007669"/>
    <property type="project" value="UniProtKB-UniRule"/>
</dbReference>
<dbReference type="Gene3D" id="2.60.175.20">
    <property type="entry name" value="Major capsid L1 (late) superfamily, Papillomavirus"/>
    <property type="match status" value="2"/>
</dbReference>
<dbReference type="HAMAP" id="MF_04002">
    <property type="entry name" value="PPV_L1"/>
    <property type="match status" value="1"/>
</dbReference>
<dbReference type="InterPro" id="IPR002210">
    <property type="entry name" value="Capsid_L1_Papillomavir"/>
</dbReference>
<dbReference type="InterPro" id="IPR036973">
    <property type="entry name" value="Capsid_L1_sf_Papillomavir"/>
</dbReference>
<dbReference type="InterPro" id="IPR011222">
    <property type="entry name" value="dsDNA_vir_gr_I_capsid"/>
</dbReference>
<dbReference type="Pfam" id="PF00500">
    <property type="entry name" value="Late_protein_L1"/>
    <property type="match status" value="1"/>
</dbReference>
<dbReference type="PRINTS" id="PR00865">
    <property type="entry name" value="HPVCAPSIDL1"/>
</dbReference>
<dbReference type="SUPFAM" id="SSF88648">
    <property type="entry name" value="Group I dsDNA viruses"/>
    <property type="match status" value="1"/>
</dbReference>
<organism>
    <name type="scientific">Human papillomavirus 17</name>
    <dbReference type="NCBI Taxonomy" id="10607"/>
    <lineage>
        <taxon>Viruses</taxon>
        <taxon>Monodnaviria</taxon>
        <taxon>Shotokuvirae</taxon>
        <taxon>Cossaviricota</taxon>
        <taxon>Papovaviricetes</taxon>
        <taxon>Zurhausenvirales</taxon>
        <taxon>Papillomaviridae</taxon>
        <taxon>Firstpapillomavirinae</taxon>
        <taxon>Betapapillomavirus</taxon>
        <taxon>Betapapillomavirus 2</taxon>
    </lineage>
</organism>